<reference key="1">
    <citation type="journal article" date="2005" name="PLoS Biol.">
        <title>The Wolbachia genome of Brugia malayi: endosymbiont evolution within a human pathogenic nematode.</title>
        <authorList>
            <person name="Foster J."/>
            <person name="Ganatra M."/>
            <person name="Kamal I."/>
            <person name="Ware J."/>
            <person name="Makarova K."/>
            <person name="Ivanova N."/>
            <person name="Bhattacharyya A."/>
            <person name="Kapatral V."/>
            <person name="Kumar S."/>
            <person name="Posfai J."/>
            <person name="Vincze T."/>
            <person name="Ingram J."/>
            <person name="Moran L."/>
            <person name="Lapidus A."/>
            <person name="Omelchenko M."/>
            <person name="Kyrpides N."/>
            <person name="Ghedin E."/>
            <person name="Wang S."/>
            <person name="Goltsman E."/>
            <person name="Joukov V."/>
            <person name="Ostrovskaya O."/>
            <person name="Tsukerman K."/>
            <person name="Mazur M."/>
            <person name="Comb D."/>
            <person name="Koonin E."/>
            <person name="Slatko B."/>
        </authorList>
    </citation>
    <scope>NUCLEOTIDE SEQUENCE [LARGE SCALE GENOMIC DNA]</scope>
    <source>
        <strain>TRS</strain>
    </source>
</reference>
<protein>
    <recommendedName>
        <fullName evidence="1">Dihydroorotase</fullName>
        <shortName evidence="1">DHOase</shortName>
        <ecNumber evidence="1">3.5.2.3</ecNumber>
    </recommendedName>
</protein>
<proteinExistence type="inferred from homology"/>
<evidence type="ECO:0000255" key="1">
    <source>
        <dbReference type="HAMAP-Rule" id="MF_00220"/>
    </source>
</evidence>
<keyword id="KW-0378">Hydrolase</keyword>
<keyword id="KW-0479">Metal-binding</keyword>
<keyword id="KW-0665">Pyrimidine biosynthesis</keyword>
<keyword id="KW-1185">Reference proteome</keyword>
<keyword id="KW-0862">Zinc</keyword>
<comment type="function">
    <text evidence="1">Catalyzes the reversible cyclization of carbamoyl aspartate to dihydroorotate.</text>
</comment>
<comment type="catalytic activity">
    <reaction evidence="1">
        <text>(S)-dihydroorotate + H2O = N-carbamoyl-L-aspartate + H(+)</text>
        <dbReference type="Rhea" id="RHEA:24296"/>
        <dbReference type="ChEBI" id="CHEBI:15377"/>
        <dbReference type="ChEBI" id="CHEBI:15378"/>
        <dbReference type="ChEBI" id="CHEBI:30864"/>
        <dbReference type="ChEBI" id="CHEBI:32814"/>
        <dbReference type="EC" id="3.5.2.3"/>
    </reaction>
</comment>
<comment type="cofactor">
    <cofactor evidence="1">
        <name>Zn(2+)</name>
        <dbReference type="ChEBI" id="CHEBI:29105"/>
    </cofactor>
    <text evidence="1">Binds 2 Zn(2+) ions per subunit.</text>
</comment>
<comment type="pathway">
    <text evidence="1">Pyrimidine metabolism; UMP biosynthesis via de novo pathway; (S)-dihydroorotate from bicarbonate: step 3/3.</text>
</comment>
<comment type="similarity">
    <text evidence="1">Belongs to the metallo-dependent hydrolases superfamily. DHOase family. Class I DHOase subfamily.</text>
</comment>
<gene>
    <name evidence="1" type="primary">pyrC</name>
    <name type="ordered locus">Wbm0446</name>
</gene>
<dbReference type="EC" id="3.5.2.3" evidence="1"/>
<dbReference type="EMBL" id="AE017321">
    <property type="protein sequence ID" value="AAW71034.1"/>
    <property type="molecule type" value="Genomic_DNA"/>
</dbReference>
<dbReference type="RefSeq" id="WP_011256644.1">
    <property type="nucleotide sequence ID" value="NC_006833.1"/>
</dbReference>
<dbReference type="SMR" id="Q5GSJ0"/>
<dbReference type="STRING" id="292805.Wbm0446"/>
<dbReference type="KEGG" id="wbm:Wbm0446"/>
<dbReference type="eggNOG" id="COG0044">
    <property type="taxonomic scope" value="Bacteria"/>
</dbReference>
<dbReference type="HOGENOM" id="CLU_015572_1_0_5"/>
<dbReference type="UniPathway" id="UPA00070">
    <property type="reaction ID" value="UER00117"/>
</dbReference>
<dbReference type="Proteomes" id="UP000000534">
    <property type="component" value="Chromosome"/>
</dbReference>
<dbReference type="GO" id="GO:0005737">
    <property type="term" value="C:cytoplasm"/>
    <property type="evidence" value="ECO:0007669"/>
    <property type="project" value="TreeGrafter"/>
</dbReference>
<dbReference type="GO" id="GO:0004038">
    <property type="term" value="F:allantoinase activity"/>
    <property type="evidence" value="ECO:0007669"/>
    <property type="project" value="TreeGrafter"/>
</dbReference>
<dbReference type="GO" id="GO:0004151">
    <property type="term" value="F:dihydroorotase activity"/>
    <property type="evidence" value="ECO:0007669"/>
    <property type="project" value="UniProtKB-UniRule"/>
</dbReference>
<dbReference type="GO" id="GO:0008270">
    <property type="term" value="F:zinc ion binding"/>
    <property type="evidence" value="ECO:0007669"/>
    <property type="project" value="UniProtKB-UniRule"/>
</dbReference>
<dbReference type="GO" id="GO:0044205">
    <property type="term" value="P:'de novo' UMP biosynthetic process"/>
    <property type="evidence" value="ECO:0007669"/>
    <property type="project" value="UniProtKB-UniRule"/>
</dbReference>
<dbReference type="GO" id="GO:0006145">
    <property type="term" value="P:purine nucleobase catabolic process"/>
    <property type="evidence" value="ECO:0007669"/>
    <property type="project" value="TreeGrafter"/>
</dbReference>
<dbReference type="CDD" id="cd01317">
    <property type="entry name" value="DHOase_IIa"/>
    <property type="match status" value="1"/>
</dbReference>
<dbReference type="Gene3D" id="3.20.20.140">
    <property type="entry name" value="Metal-dependent hydrolases"/>
    <property type="match status" value="1"/>
</dbReference>
<dbReference type="Gene3D" id="2.30.40.10">
    <property type="entry name" value="Urease, subunit C, domain 1"/>
    <property type="match status" value="1"/>
</dbReference>
<dbReference type="HAMAP" id="MF_00220_B">
    <property type="entry name" value="PyrC_classI_B"/>
    <property type="match status" value="1"/>
</dbReference>
<dbReference type="InterPro" id="IPR006680">
    <property type="entry name" value="Amidohydro-rel"/>
</dbReference>
<dbReference type="InterPro" id="IPR004722">
    <property type="entry name" value="DHOase"/>
</dbReference>
<dbReference type="InterPro" id="IPR050138">
    <property type="entry name" value="DHOase/Allantoinase_Hydrolase"/>
</dbReference>
<dbReference type="InterPro" id="IPR002195">
    <property type="entry name" value="Dihydroorotase_CS"/>
</dbReference>
<dbReference type="InterPro" id="IPR011059">
    <property type="entry name" value="Metal-dep_hydrolase_composite"/>
</dbReference>
<dbReference type="InterPro" id="IPR032466">
    <property type="entry name" value="Metal_Hydrolase"/>
</dbReference>
<dbReference type="NCBIfam" id="TIGR00857">
    <property type="entry name" value="pyrC_multi"/>
    <property type="match status" value="1"/>
</dbReference>
<dbReference type="PANTHER" id="PTHR43668">
    <property type="entry name" value="ALLANTOINASE"/>
    <property type="match status" value="1"/>
</dbReference>
<dbReference type="PANTHER" id="PTHR43668:SF2">
    <property type="entry name" value="ALLANTOINASE"/>
    <property type="match status" value="1"/>
</dbReference>
<dbReference type="Pfam" id="PF01979">
    <property type="entry name" value="Amidohydro_1"/>
    <property type="match status" value="1"/>
</dbReference>
<dbReference type="SUPFAM" id="SSF51338">
    <property type="entry name" value="Composite domain of metallo-dependent hydrolases"/>
    <property type="match status" value="1"/>
</dbReference>
<dbReference type="SUPFAM" id="SSF51556">
    <property type="entry name" value="Metallo-dependent hydrolases"/>
    <property type="match status" value="1"/>
</dbReference>
<dbReference type="PROSITE" id="PS00482">
    <property type="entry name" value="DIHYDROOROTASE_1"/>
    <property type="match status" value="1"/>
</dbReference>
<dbReference type="PROSITE" id="PS00483">
    <property type="entry name" value="DIHYDROOROTASE_2"/>
    <property type="match status" value="1"/>
</dbReference>
<accession>Q5GSJ0</accession>
<organism>
    <name type="scientific">Wolbachia sp. subsp. Brugia malayi (strain TRS)</name>
    <dbReference type="NCBI Taxonomy" id="292805"/>
    <lineage>
        <taxon>Bacteria</taxon>
        <taxon>Pseudomonadati</taxon>
        <taxon>Pseudomonadota</taxon>
        <taxon>Alphaproteobacteria</taxon>
        <taxon>Rickettsiales</taxon>
        <taxon>Anaplasmataceae</taxon>
        <taxon>Wolbachieae</taxon>
        <taxon>Wolbachia</taxon>
    </lineage>
</organism>
<feature type="chain" id="PRO_0000325597" description="Dihydroorotase">
    <location>
        <begin position="1"/>
        <end position="443"/>
    </location>
</feature>
<feature type="active site" evidence="1">
    <location>
        <position position="324"/>
    </location>
</feature>
<feature type="binding site" evidence="1">
    <location>
        <position position="80"/>
    </location>
    <ligand>
        <name>Zn(2+)</name>
        <dbReference type="ChEBI" id="CHEBI:29105"/>
        <label>1</label>
    </ligand>
</feature>
<feature type="binding site" evidence="1">
    <location>
        <begin position="82"/>
        <end position="84"/>
    </location>
    <ligand>
        <name>substrate</name>
    </ligand>
</feature>
<feature type="binding site" evidence="1">
    <location>
        <position position="82"/>
    </location>
    <ligand>
        <name>Zn(2+)</name>
        <dbReference type="ChEBI" id="CHEBI:29105"/>
        <label>1</label>
    </ligand>
</feature>
<feature type="binding site" evidence="1">
    <location>
        <position position="114"/>
    </location>
    <ligand>
        <name>substrate</name>
    </ligand>
</feature>
<feature type="binding site" evidence="1">
    <location>
        <position position="170"/>
    </location>
    <ligand>
        <name>Zn(2+)</name>
        <dbReference type="ChEBI" id="CHEBI:29105"/>
        <label>1</label>
    </ligand>
</feature>
<feature type="binding site" evidence="1">
    <location>
        <position position="170"/>
    </location>
    <ligand>
        <name>Zn(2+)</name>
        <dbReference type="ChEBI" id="CHEBI:29105"/>
        <label>2</label>
    </ligand>
</feature>
<feature type="binding site" evidence="1">
    <location>
        <position position="197"/>
    </location>
    <ligand>
        <name>Zn(2+)</name>
        <dbReference type="ChEBI" id="CHEBI:29105"/>
        <label>2</label>
    </ligand>
</feature>
<feature type="binding site" evidence="1">
    <location>
        <position position="251"/>
    </location>
    <ligand>
        <name>Zn(2+)</name>
        <dbReference type="ChEBI" id="CHEBI:29105"/>
        <label>2</label>
    </ligand>
</feature>
<feature type="binding site" evidence="1">
    <location>
        <position position="297"/>
    </location>
    <ligand>
        <name>substrate</name>
    </ligand>
</feature>
<feature type="binding site" evidence="1">
    <location>
        <position position="324"/>
    </location>
    <ligand>
        <name>Zn(2+)</name>
        <dbReference type="ChEBI" id="CHEBI:29105"/>
        <label>1</label>
    </ligand>
</feature>
<feature type="binding site" evidence="1">
    <location>
        <position position="328"/>
    </location>
    <ligand>
        <name>substrate</name>
    </ligand>
</feature>
<feature type="binding site" evidence="1">
    <location>
        <begin position="342"/>
        <end position="343"/>
    </location>
    <ligand>
        <name>substrate</name>
    </ligand>
</feature>
<sequence>MTQTWNLLQAGQERNYKVAYINARIIDPETKLDIEGSLLTEGSKIIDFGESLFSNGVPSGVDETINCEGLVLMPGLVDIHVHFREPGQEHKETIYTGSKSAAAGGVTTVVCQPNTTPAIDSVILAKYLKYRALETSHVNIEFYAKITTSEEKLTEVALLKEAGAVGFTDDGIPVMNPMIMRQALLYSSMLNVPIAQHAEDLNLSAGGAINEGKISEALGVKGILSASESVMVSRDILLMKDIENVHYHILHISSKDSLDAVKRAKDLGLNVTCEVTPHHFTLTEDIVKQHGAIAKMNPPLRTEEDRLAMVEGLKTGVIDCIATDHAPHDRSSKDLPLESAAFGIVGLETMLPLSLELYHSGQIDLFDILAKLTYKPADIIHVPRGRVQKNFVADLTLVDLNYEWEIKIDSFASKSKNSPFGGRKVKGRVVRTIVSGKTVYSQK</sequence>
<name>PYRC_WOLTR</name>